<feature type="chain" id="PRO_0000241065" description="Glutamyl-tRNA(Gln) amidotransferase subunit A">
    <location>
        <begin position="1"/>
        <end position="491"/>
    </location>
</feature>
<feature type="active site" description="Charge relay system" evidence="1">
    <location>
        <position position="79"/>
    </location>
</feature>
<feature type="active site" description="Charge relay system" evidence="1">
    <location>
        <position position="158"/>
    </location>
</feature>
<feature type="active site" description="Acyl-ester intermediate" evidence="1">
    <location>
        <position position="182"/>
    </location>
</feature>
<sequence>MKKELLKLSILEAHNCLKRKEFSPTELVEAYIDEMENENLNAFVTKTQDIALEQARKVENLLLQGEKISPLAGMPIGVKDLFCTAGVRTTACSDILKNFVPSYESTISQNLWNNNACMMGKLNMDEFAMGSASSYSCFGPVKNPWKGPYGEDLIPGGSSGGSSAAVAGRLCIAAIGSDTGGSVRQPAALCGIVGAKPTYGRCSRWGMIAFASSLDQAGVLTRTVEDAAIMLQAMCGHDKKDSTSSPVDVPDFLKHISYDIKGKRIGIVREYAIPENKERECVSEMWAANLKYLQDCGAEIVDISLHHTKYALPLYYVIASSEASSNLARYDGVRYGVRREGESIDDMYELTRSLNFGEEVKRRILIGAYALSYGCYDAYYDKSQRVRRRVMQDFDEAFKKVDCILTLTTPRNFIGMDEKLEMIDRYYSDVFTVPASLAGLPAISIPSGLTKHGLPMSLQVIGKHYDEGEIFNVAAVIHKRTGDLLKHLHHF</sequence>
<name>GATA_ANAPZ</name>
<reference key="1">
    <citation type="journal article" date="2006" name="PLoS Genet.">
        <title>Comparative genomics of emerging human ehrlichiosis agents.</title>
        <authorList>
            <person name="Dunning Hotopp J.C."/>
            <person name="Lin M."/>
            <person name="Madupu R."/>
            <person name="Crabtree J."/>
            <person name="Angiuoli S.V."/>
            <person name="Eisen J.A."/>
            <person name="Seshadri R."/>
            <person name="Ren Q."/>
            <person name="Wu M."/>
            <person name="Utterback T.R."/>
            <person name="Smith S."/>
            <person name="Lewis M."/>
            <person name="Khouri H."/>
            <person name="Zhang C."/>
            <person name="Niu H."/>
            <person name="Lin Q."/>
            <person name="Ohashi N."/>
            <person name="Zhi N."/>
            <person name="Nelson W.C."/>
            <person name="Brinkac L.M."/>
            <person name="Dodson R.J."/>
            <person name="Rosovitz M.J."/>
            <person name="Sundaram J.P."/>
            <person name="Daugherty S.C."/>
            <person name="Davidsen T."/>
            <person name="Durkin A.S."/>
            <person name="Gwinn M.L."/>
            <person name="Haft D.H."/>
            <person name="Selengut J.D."/>
            <person name="Sullivan S.A."/>
            <person name="Zafar N."/>
            <person name="Zhou L."/>
            <person name="Benahmed F."/>
            <person name="Forberger H."/>
            <person name="Halpin R."/>
            <person name="Mulligan S."/>
            <person name="Robinson J."/>
            <person name="White O."/>
            <person name="Rikihisa Y."/>
            <person name="Tettelin H."/>
        </authorList>
    </citation>
    <scope>NUCLEOTIDE SEQUENCE [LARGE SCALE GENOMIC DNA]</scope>
    <source>
        <strain>HZ</strain>
    </source>
</reference>
<gene>
    <name evidence="1" type="primary">gatA</name>
    <name type="ordered locus">APH_0748</name>
</gene>
<dbReference type="EC" id="6.3.5.7" evidence="1"/>
<dbReference type="EMBL" id="CP000235">
    <property type="protein sequence ID" value="ABD44455.1"/>
    <property type="molecule type" value="Genomic_DNA"/>
</dbReference>
<dbReference type="RefSeq" id="WP_011450848.1">
    <property type="nucleotide sequence ID" value="NC_007797.1"/>
</dbReference>
<dbReference type="SMR" id="Q2GJX4"/>
<dbReference type="STRING" id="212042.APH_0748"/>
<dbReference type="PaxDb" id="212042-APH_0748"/>
<dbReference type="EnsemblBacteria" id="ABD44455">
    <property type="protein sequence ID" value="ABD44455"/>
    <property type="gene ID" value="APH_0748"/>
</dbReference>
<dbReference type="GeneID" id="92748207"/>
<dbReference type="KEGG" id="aph:APH_0748"/>
<dbReference type="eggNOG" id="COG0154">
    <property type="taxonomic scope" value="Bacteria"/>
</dbReference>
<dbReference type="HOGENOM" id="CLU_009600_0_3_5"/>
<dbReference type="Proteomes" id="UP000001943">
    <property type="component" value="Chromosome"/>
</dbReference>
<dbReference type="GO" id="GO:0030956">
    <property type="term" value="C:glutamyl-tRNA(Gln) amidotransferase complex"/>
    <property type="evidence" value="ECO:0007669"/>
    <property type="project" value="InterPro"/>
</dbReference>
<dbReference type="GO" id="GO:0005524">
    <property type="term" value="F:ATP binding"/>
    <property type="evidence" value="ECO:0007669"/>
    <property type="project" value="UniProtKB-KW"/>
</dbReference>
<dbReference type="GO" id="GO:0050567">
    <property type="term" value="F:glutaminyl-tRNA synthase (glutamine-hydrolyzing) activity"/>
    <property type="evidence" value="ECO:0007669"/>
    <property type="project" value="UniProtKB-UniRule"/>
</dbReference>
<dbReference type="GO" id="GO:0006412">
    <property type="term" value="P:translation"/>
    <property type="evidence" value="ECO:0007669"/>
    <property type="project" value="UniProtKB-UniRule"/>
</dbReference>
<dbReference type="Gene3D" id="3.90.1300.10">
    <property type="entry name" value="Amidase signature (AS) domain"/>
    <property type="match status" value="1"/>
</dbReference>
<dbReference type="HAMAP" id="MF_00120">
    <property type="entry name" value="GatA"/>
    <property type="match status" value="1"/>
</dbReference>
<dbReference type="InterPro" id="IPR000120">
    <property type="entry name" value="Amidase"/>
</dbReference>
<dbReference type="InterPro" id="IPR020556">
    <property type="entry name" value="Amidase_CS"/>
</dbReference>
<dbReference type="InterPro" id="IPR023631">
    <property type="entry name" value="Amidase_dom"/>
</dbReference>
<dbReference type="InterPro" id="IPR036928">
    <property type="entry name" value="AS_sf"/>
</dbReference>
<dbReference type="InterPro" id="IPR004412">
    <property type="entry name" value="GatA"/>
</dbReference>
<dbReference type="NCBIfam" id="TIGR00132">
    <property type="entry name" value="gatA"/>
    <property type="match status" value="1"/>
</dbReference>
<dbReference type="PANTHER" id="PTHR11895:SF151">
    <property type="entry name" value="GLUTAMYL-TRNA(GLN) AMIDOTRANSFERASE SUBUNIT A"/>
    <property type="match status" value="1"/>
</dbReference>
<dbReference type="PANTHER" id="PTHR11895">
    <property type="entry name" value="TRANSAMIDASE"/>
    <property type="match status" value="1"/>
</dbReference>
<dbReference type="Pfam" id="PF01425">
    <property type="entry name" value="Amidase"/>
    <property type="match status" value="1"/>
</dbReference>
<dbReference type="SUPFAM" id="SSF75304">
    <property type="entry name" value="Amidase signature (AS) enzymes"/>
    <property type="match status" value="1"/>
</dbReference>
<dbReference type="PROSITE" id="PS00571">
    <property type="entry name" value="AMIDASES"/>
    <property type="match status" value="1"/>
</dbReference>
<accession>Q2GJX4</accession>
<organism>
    <name type="scientific">Anaplasma phagocytophilum (strain HZ)</name>
    <dbReference type="NCBI Taxonomy" id="212042"/>
    <lineage>
        <taxon>Bacteria</taxon>
        <taxon>Pseudomonadati</taxon>
        <taxon>Pseudomonadota</taxon>
        <taxon>Alphaproteobacteria</taxon>
        <taxon>Rickettsiales</taxon>
        <taxon>Anaplasmataceae</taxon>
        <taxon>Anaplasma</taxon>
        <taxon>phagocytophilum group</taxon>
    </lineage>
</organism>
<proteinExistence type="inferred from homology"/>
<evidence type="ECO:0000255" key="1">
    <source>
        <dbReference type="HAMAP-Rule" id="MF_00120"/>
    </source>
</evidence>
<keyword id="KW-0067">ATP-binding</keyword>
<keyword id="KW-0436">Ligase</keyword>
<keyword id="KW-0547">Nucleotide-binding</keyword>
<keyword id="KW-0648">Protein biosynthesis</keyword>
<comment type="function">
    <text evidence="1">Allows the formation of correctly charged Gln-tRNA(Gln) through the transamidation of misacylated Glu-tRNA(Gln) in organisms which lack glutaminyl-tRNA synthetase. The reaction takes place in the presence of glutamine and ATP through an activated gamma-phospho-Glu-tRNA(Gln).</text>
</comment>
<comment type="catalytic activity">
    <reaction evidence="1">
        <text>L-glutamyl-tRNA(Gln) + L-glutamine + ATP + H2O = L-glutaminyl-tRNA(Gln) + L-glutamate + ADP + phosphate + H(+)</text>
        <dbReference type="Rhea" id="RHEA:17521"/>
        <dbReference type="Rhea" id="RHEA-COMP:9681"/>
        <dbReference type="Rhea" id="RHEA-COMP:9684"/>
        <dbReference type="ChEBI" id="CHEBI:15377"/>
        <dbReference type="ChEBI" id="CHEBI:15378"/>
        <dbReference type="ChEBI" id="CHEBI:29985"/>
        <dbReference type="ChEBI" id="CHEBI:30616"/>
        <dbReference type="ChEBI" id="CHEBI:43474"/>
        <dbReference type="ChEBI" id="CHEBI:58359"/>
        <dbReference type="ChEBI" id="CHEBI:78520"/>
        <dbReference type="ChEBI" id="CHEBI:78521"/>
        <dbReference type="ChEBI" id="CHEBI:456216"/>
        <dbReference type="EC" id="6.3.5.7"/>
    </reaction>
</comment>
<comment type="subunit">
    <text evidence="1">Heterotrimer of A, B and C subunits.</text>
</comment>
<comment type="similarity">
    <text evidence="1">Belongs to the amidase family. GatA subfamily.</text>
</comment>
<protein>
    <recommendedName>
        <fullName evidence="1">Glutamyl-tRNA(Gln) amidotransferase subunit A</fullName>
        <shortName evidence="1">Glu-ADT subunit A</shortName>
        <ecNumber evidence="1">6.3.5.7</ecNumber>
    </recommendedName>
</protein>